<reference key="1">
    <citation type="submission" date="2007-07" db="EMBL/GenBank/DDBJ databases">
        <title>Complete sequence of Fervidobacterium nodosum Rt17-B1.</title>
        <authorList>
            <consortium name="US DOE Joint Genome Institute"/>
            <person name="Copeland A."/>
            <person name="Lucas S."/>
            <person name="Lapidus A."/>
            <person name="Barry K."/>
            <person name="Glavina del Rio T."/>
            <person name="Dalin E."/>
            <person name="Tice H."/>
            <person name="Pitluck S."/>
            <person name="Saunders E."/>
            <person name="Brettin T."/>
            <person name="Bruce D."/>
            <person name="Detter J.C."/>
            <person name="Han C."/>
            <person name="Schmutz J."/>
            <person name="Larimer F."/>
            <person name="Land M."/>
            <person name="Hauser L."/>
            <person name="Kyrpides N."/>
            <person name="Mikhailova N."/>
            <person name="Nelson K."/>
            <person name="Gogarten J.P."/>
            <person name="Noll K."/>
            <person name="Richardson P."/>
        </authorList>
    </citation>
    <scope>NUCLEOTIDE SEQUENCE [LARGE SCALE GENOMIC DNA]</scope>
    <source>
        <strain>ATCC 35602 / DSM 5306 / Rt17-B1</strain>
    </source>
</reference>
<evidence type="ECO:0000255" key="1">
    <source>
        <dbReference type="HAMAP-Rule" id="MF_00041"/>
    </source>
</evidence>
<comment type="catalytic activity">
    <reaction evidence="1">
        <text>tRNA(Cys) + L-cysteine + ATP = L-cysteinyl-tRNA(Cys) + AMP + diphosphate</text>
        <dbReference type="Rhea" id="RHEA:17773"/>
        <dbReference type="Rhea" id="RHEA-COMP:9661"/>
        <dbReference type="Rhea" id="RHEA-COMP:9679"/>
        <dbReference type="ChEBI" id="CHEBI:30616"/>
        <dbReference type="ChEBI" id="CHEBI:33019"/>
        <dbReference type="ChEBI" id="CHEBI:35235"/>
        <dbReference type="ChEBI" id="CHEBI:78442"/>
        <dbReference type="ChEBI" id="CHEBI:78517"/>
        <dbReference type="ChEBI" id="CHEBI:456215"/>
        <dbReference type="EC" id="6.1.1.16"/>
    </reaction>
</comment>
<comment type="cofactor">
    <cofactor evidence="1">
        <name>Zn(2+)</name>
        <dbReference type="ChEBI" id="CHEBI:29105"/>
    </cofactor>
    <text evidence="1">Binds 1 zinc ion per subunit.</text>
</comment>
<comment type="subunit">
    <text evidence="1">Monomer.</text>
</comment>
<comment type="subcellular location">
    <subcellularLocation>
        <location evidence="1">Cytoplasm</location>
    </subcellularLocation>
</comment>
<comment type="similarity">
    <text evidence="1">Belongs to the class-I aminoacyl-tRNA synthetase family.</text>
</comment>
<proteinExistence type="inferred from homology"/>
<accession>A7HKV1</accession>
<protein>
    <recommendedName>
        <fullName evidence="1">Cysteine--tRNA ligase</fullName>
        <ecNumber evidence="1">6.1.1.16</ecNumber>
    </recommendedName>
    <alternativeName>
        <fullName evidence="1">Cysteinyl-tRNA synthetase</fullName>
        <shortName evidence="1">CysRS</shortName>
    </alternativeName>
</protein>
<gene>
    <name evidence="1" type="primary">cysS</name>
    <name type="ordered locus">Fnod_0679</name>
</gene>
<keyword id="KW-0030">Aminoacyl-tRNA synthetase</keyword>
<keyword id="KW-0067">ATP-binding</keyword>
<keyword id="KW-0963">Cytoplasm</keyword>
<keyword id="KW-0436">Ligase</keyword>
<keyword id="KW-0479">Metal-binding</keyword>
<keyword id="KW-0547">Nucleotide-binding</keyword>
<keyword id="KW-0648">Protein biosynthesis</keyword>
<keyword id="KW-1185">Reference proteome</keyword>
<keyword id="KW-0862">Zinc</keyword>
<sequence length="470" mass="54259">MTKVYITDTLSKSKVPLETLEPGVVKMYVCGPTVYNYIHIGNARPMVVFDALRRFLEFVGYRVIMVQNFTDIDDKIINEAKEWNVDWKTVADTFIAEYFHDAQLLGVRAANYHPRTTDFVKDIVEAIETMIKKDFAYPAENGDVYFSVRKLRDYGKLSGKNLDDLRAGARVDVNELKKDPLDFVLWKSAKPGEPTWDSPWCNGRPGWHIECSVMSQKLLGDMFDIHGGGEDLIFPHHEDEIAQSEALTGKPPAKYWMHNGMIIVRGDKMSKSLGNTFMVREAVRRYTKDGVKLFLLSKHYRSPMEFSDEILQDNMRAAQRVHNALNRFTEKYPYPLVPKIDEEMENFIDRFVEALSDDFNTPVALSILFDTVKELNKSMDEGNDERALKMYHLVKRIYGPVLGVFDSEIQKQQQVNSEQLDQLIQGIINLRNEYRKNKQFEIADKLRDALLNAKIKLLDTPEGTKYEIND</sequence>
<feature type="chain" id="PRO_1000071071" description="Cysteine--tRNA ligase">
    <location>
        <begin position="1"/>
        <end position="470"/>
    </location>
</feature>
<feature type="short sequence motif" description="'HIGH' region">
    <location>
        <begin position="32"/>
        <end position="42"/>
    </location>
</feature>
<feature type="short sequence motif" description="'KMSKS' region">
    <location>
        <begin position="268"/>
        <end position="272"/>
    </location>
</feature>
<feature type="binding site" evidence="1">
    <location>
        <position position="30"/>
    </location>
    <ligand>
        <name>Zn(2+)</name>
        <dbReference type="ChEBI" id="CHEBI:29105"/>
    </ligand>
</feature>
<feature type="binding site" evidence="1">
    <location>
        <position position="211"/>
    </location>
    <ligand>
        <name>Zn(2+)</name>
        <dbReference type="ChEBI" id="CHEBI:29105"/>
    </ligand>
</feature>
<feature type="binding site" evidence="1">
    <location>
        <position position="236"/>
    </location>
    <ligand>
        <name>Zn(2+)</name>
        <dbReference type="ChEBI" id="CHEBI:29105"/>
    </ligand>
</feature>
<feature type="binding site" evidence="1">
    <location>
        <position position="240"/>
    </location>
    <ligand>
        <name>Zn(2+)</name>
        <dbReference type="ChEBI" id="CHEBI:29105"/>
    </ligand>
</feature>
<feature type="binding site" evidence="1">
    <location>
        <position position="271"/>
    </location>
    <ligand>
        <name>ATP</name>
        <dbReference type="ChEBI" id="CHEBI:30616"/>
    </ligand>
</feature>
<name>SYC_FERNB</name>
<organism>
    <name type="scientific">Fervidobacterium nodosum (strain ATCC 35602 / DSM 5306 / Rt17-B1)</name>
    <dbReference type="NCBI Taxonomy" id="381764"/>
    <lineage>
        <taxon>Bacteria</taxon>
        <taxon>Thermotogati</taxon>
        <taxon>Thermotogota</taxon>
        <taxon>Thermotogae</taxon>
        <taxon>Thermotogales</taxon>
        <taxon>Fervidobacteriaceae</taxon>
        <taxon>Fervidobacterium</taxon>
    </lineage>
</organism>
<dbReference type="EC" id="6.1.1.16" evidence="1"/>
<dbReference type="EMBL" id="CP000771">
    <property type="protein sequence ID" value="ABS60534.1"/>
    <property type="molecule type" value="Genomic_DNA"/>
</dbReference>
<dbReference type="RefSeq" id="WP_011993853.1">
    <property type="nucleotide sequence ID" value="NC_009718.1"/>
</dbReference>
<dbReference type="SMR" id="A7HKV1"/>
<dbReference type="STRING" id="381764.Fnod_0679"/>
<dbReference type="KEGG" id="fno:Fnod_0679"/>
<dbReference type="eggNOG" id="COG0215">
    <property type="taxonomic scope" value="Bacteria"/>
</dbReference>
<dbReference type="HOGENOM" id="CLU_013528_0_1_0"/>
<dbReference type="OrthoDB" id="9815130at2"/>
<dbReference type="Proteomes" id="UP000002415">
    <property type="component" value="Chromosome"/>
</dbReference>
<dbReference type="GO" id="GO:0005829">
    <property type="term" value="C:cytosol"/>
    <property type="evidence" value="ECO:0007669"/>
    <property type="project" value="TreeGrafter"/>
</dbReference>
<dbReference type="GO" id="GO:0005524">
    <property type="term" value="F:ATP binding"/>
    <property type="evidence" value="ECO:0007669"/>
    <property type="project" value="UniProtKB-UniRule"/>
</dbReference>
<dbReference type="GO" id="GO:0004817">
    <property type="term" value="F:cysteine-tRNA ligase activity"/>
    <property type="evidence" value="ECO:0007669"/>
    <property type="project" value="UniProtKB-UniRule"/>
</dbReference>
<dbReference type="GO" id="GO:0008270">
    <property type="term" value="F:zinc ion binding"/>
    <property type="evidence" value="ECO:0007669"/>
    <property type="project" value="UniProtKB-UniRule"/>
</dbReference>
<dbReference type="GO" id="GO:0006423">
    <property type="term" value="P:cysteinyl-tRNA aminoacylation"/>
    <property type="evidence" value="ECO:0007669"/>
    <property type="project" value="UniProtKB-UniRule"/>
</dbReference>
<dbReference type="CDD" id="cd00672">
    <property type="entry name" value="CysRS_core"/>
    <property type="match status" value="1"/>
</dbReference>
<dbReference type="FunFam" id="3.40.50.620:FF:000009">
    <property type="entry name" value="Cysteine--tRNA ligase"/>
    <property type="match status" value="1"/>
</dbReference>
<dbReference type="Gene3D" id="1.20.120.1910">
    <property type="entry name" value="Cysteine-tRNA ligase, C-terminal anti-codon recognition domain"/>
    <property type="match status" value="1"/>
</dbReference>
<dbReference type="Gene3D" id="3.40.50.620">
    <property type="entry name" value="HUPs"/>
    <property type="match status" value="1"/>
</dbReference>
<dbReference type="HAMAP" id="MF_00041">
    <property type="entry name" value="Cys_tRNA_synth"/>
    <property type="match status" value="1"/>
</dbReference>
<dbReference type="InterPro" id="IPR015803">
    <property type="entry name" value="Cys-tRNA-ligase"/>
</dbReference>
<dbReference type="InterPro" id="IPR015273">
    <property type="entry name" value="Cys-tRNA-synt_Ia_DALR"/>
</dbReference>
<dbReference type="InterPro" id="IPR024909">
    <property type="entry name" value="Cys-tRNA/MSH_ligase"/>
</dbReference>
<dbReference type="InterPro" id="IPR014729">
    <property type="entry name" value="Rossmann-like_a/b/a_fold"/>
</dbReference>
<dbReference type="InterPro" id="IPR032678">
    <property type="entry name" value="tRNA-synt_1_cat_dom"/>
</dbReference>
<dbReference type="InterPro" id="IPR009080">
    <property type="entry name" value="tRNAsynth_Ia_anticodon-bd"/>
</dbReference>
<dbReference type="NCBIfam" id="TIGR00435">
    <property type="entry name" value="cysS"/>
    <property type="match status" value="1"/>
</dbReference>
<dbReference type="PANTHER" id="PTHR10890:SF3">
    <property type="entry name" value="CYSTEINE--TRNA LIGASE, CYTOPLASMIC"/>
    <property type="match status" value="1"/>
</dbReference>
<dbReference type="PANTHER" id="PTHR10890">
    <property type="entry name" value="CYSTEINYL-TRNA SYNTHETASE"/>
    <property type="match status" value="1"/>
</dbReference>
<dbReference type="Pfam" id="PF09190">
    <property type="entry name" value="DALR_2"/>
    <property type="match status" value="1"/>
</dbReference>
<dbReference type="Pfam" id="PF01406">
    <property type="entry name" value="tRNA-synt_1e"/>
    <property type="match status" value="1"/>
</dbReference>
<dbReference type="PRINTS" id="PR00983">
    <property type="entry name" value="TRNASYNTHCYS"/>
</dbReference>
<dbReference type="SMART" id="SM00840">
    <property type="entry name" value="DALR_2"/>
    <property type="match status" value="1"/>
</dbReference>
<dbReference type="SUPFAM" id="SSF47323">
    <property type="entry name" value="Anticodon-binding domain of a subclass of class I aminoacyl-tRNA synthetases"/>
    <property type="match status" value="1"/>
</dbReference>
<dbReference type="SUPFAM" id="SSF52374">
    <property type="entry name" value="Nucleotidylyl transferase"/>
    <property type="match status" value="1"/>
</dbReference>